<dbReference type="EC" id="2.1.1.-" evidence="1"/>
<dbReference type="EMBL" id="CP000570">
    <property type="protein sequence ID" value="ABN82277.1"/>
    <property type="molecule type" value="Genomic_DNA"/>
</dbReference>
<dbReference type="RefSeq" id="WP_004527770.1">
    <property type="nucleotide sequence ID" value="NC_009074.1"/>
</dbReference>
<dbReference type="SMR" id="A3NDQ7"/>
<dbReference type="KEGG" id="bpd:BURPS668_3467"/>
<dbReference type="HOGENOM" id="CLU_049382_4_1_4"/>
<dbReference type="GO" id="GO:0005829">
    <property type="term" value="C:cytosol"/>
    <property type="evidence" value="ECO:0007669"/>
    <property type="project" value="TreeGrafter"/>
</dbReference>
<dbReference type="GO" id="GO:0016279">
    <property type="term" value="F:protein-lysine N-methyltransferase activity"/>
    <property type="evidence" value="ECO:0007669"/>
    <property type="project" value="TreeGrafter"/>
</dbReference>
<dbReference type="GO" id="GO:0032259">
    <property type="term" value="P:methylation"/>
    <property type="evidence" value="ECO:0007669"/>
    <property type="project" value="UniProtKB-KW"/>
</dbReference>
<dbReference type="CDD" id="cd02440">
    <property type="entry name" value="AdoMet_MTases"/>
    <property type="match status" value="1"/>
</dbReference>
<dbReference type="Gene3D" id="3.40.50.150">
    <property type="entry name" value="Vaccinia Virus protein VP39"/>
    <property type="match status" value="1"/>
</dbReference>
<dbReference type="HAMAP" id="MF_00735">
    <property type="entry name" value="Methyltr_PrmA"/>
    <property type="match status" value="1"/>
</dbReference>
<dbReference type="InterPro" id="IPR050078">
    <property type="entry name" value="Ribosomal_L11_MeTrfase_PrmA"/>
</dbReference>
<dbReference type="InterPro" id="IPR004498">
    <property type="entry name" value="Ribosomal_PrmA_MeTrfase"/>
</dbReference>
<dbReference type="InterPro" id="IPR029063">
    <property type="entry name" value="SAM-dependent_MTases_sf"/>
</dbReference>
<dbReference type="NCBIfam" id="TIGR00406">
    <property type="entry name" value="prmA"/>
    <property type="match status" value="1"/>
</dbReference>
<dbReference type="PANTHER" id="PTHR43648">
    <property type="entry name" value="ELECTRON TRANSFER FLAVOPROTEIN BETA SUBUNIT LYSINE METHYLTRANSFERASE"/>
    <property type="match status" value="1"/>
</dbReference>
<dbReference type="PANTHER" id="PTHR43648:SF1">
    <property type="entry name" value="ELECTRON TRANSFER FLAVOPROTEIN BETA SUBUNIT LYSINE METHYLTRANSFERASE"/>
    <property type="match status" value="1"/>
</dbReference>
<dbReference type="Pfam" id="PF06325">
    <property type="entry name" value="PrmA"/>
    <property type="match status" value="1"/>
</dbReference>
<dbReference type="PIRSF" id="PIRSF000401">
    <property type="entry name" value="RPL11_MTase"/>
    <property type="match status" value="1"/>
</dbReference>
<dbReference type="SUPFAM" id="SSF53335">
    <property type="entry name" value="S-adenosyl-L-methionine-dependent methyltransferases"/>
    <property type="match status" value="1"/>
</dbReference>
<feature type="chain" id="PRO_1000045997" description="Ribosomal protein L11 methyltransferase">
    <location>
        <begin position="1"/>
        <end position="300"/>
    </location>
</feature>
<feature type="binding site" evidence="1">
    <location>
        <position position="152"/>
    </location>
    <ligand>
        <name>S-adenosyl-L-methionine</name>
        <dbReference type="ChEBI" id="CHEBI:59789"/>
    </ligand>
</feature>
<feature type="binding site" evidence="1">
    <location>
        <position position="173"/>
    </location>
    <ligand>
        <name>S-adenosyl-L-methionine</name>
        <dbReference type="ChEBI" id="CHEBI:59789"/>
    </ligand>
</feature>
<feature type="binding site" evidence="1">
    <location>
        <position position="195"/>
    </location>
    <ligand>
        <name>S-adenosyl-L-methionine</name>
        <dbReference type="ChEBI" id="CHEBI:59789"/>
    </ligand>
</feature>
<feature type="binding site" evidence="1">
    <location>
        <position position="234"/>
    </location>
    <ligand>
        <name>S-adenosyl-L-methionine</name>
        <dbReference type="ChEBI" id="CHEBI:59789"/>
    </ligand>
</feature>
<gene>
    <name evidence="1" type="primary">prmA</name>
    <name type="ordered locus">BURPS668_3467</name>
</gene>
<comment type="function">
    <text evidence="1">Methylates ribosomal protein L11.</text>
</comment>
<comment type="catalytic activity">
    <reaction evidence="1">
        <text>L-lysyl-[protein] + 3 S-adenosyl-L-methionine = N(6),N(6),N(6)-trimethyl-L-lysyl-[protein] + 3 S-adenosyl-L-homocysteine + 3 H(+)</text>
        <dbReference type="Rhea" id="RHEA:54192"/>
        <dbReference type="Rhea" id="RHEA-COMP:9752"/>
        <dbReference type="Rhea" id="RHEA-COMP:13826"/>
        <dbReference type="ChEBI" id="CHEBI:15378"/>
        <dbReference type="ChEBI" id="CHEBI:29969"/>
        <dbReference type="ChEBI" id="CHEBI:57856"/>
        <dbReference type="ChEBI" id="CHEBI:59789"/>
        <dbReference type="ChEBI" id="CHEBI:61961"/>
    </reaction>
</comment>
<comment type="subcellular location">
    <subcellularLocation>
        <location evidence="1">Cytoplasm</location>
    </subcellularLocation>
</comment>
<comment type="similarity">
    <text evidence="1">Belongs to the methyltransferase superfamily. PrmA family.</text>
</comment>
<keyword id="KW-0963">Cytoplasm</keyword>
<keyword id="KW-0489">Methyltransferase</keyword>
<keyword id="KW-0949">S-adenosyl-L-methionine</keyword>
<keyword id="KW-0808">Transferase</keyword>
<protein>
    <recommendedName>
        <fullName evidence="1">Ribosomal protein L11 methyltransferase</fullName>
        <shortName evidence="1">L11 Mtase</shortName>
        <ecNumber evidence="1">2.1.1.-</ecNumber>
    </recommendedName>
</protein>
<reference key="1">
    <citation type="journal article" date="2010" name="Genome Biol. Evol.">
        <title>Continuing evolution of Burkholderia mallei through genome reduction and large-scale rearrangements.</title>
        <authorList>
            <person name="Losada L."/>
            <person name="Ronning C.M."/>
            <person name="DeShazer D."/>
            <person name="Woods D."/>
            <person name="Fedorova N."/>
            <person name="Kim H.S."/>
            <person name="Shabalina S.A."/>
            <person name="Pearson T.R."/>
            <person name="Brinkac L."/>
            <person name="Tan P."/>
            <person name="Nandi T."/>
            <person name="Crabtree J."/>
            <person name="Badger J."/>
            <person name="Beckstrom-Sternberg S."/>
            <person name="Saqib M."/>
            <person name="Schutzer S.E."/>
            <person name="Keim P."/>
            <person name="Nierman W.C."/>
        </authorList>
    </citation>
    <scope>NUCLEOTIDE SEQUENCE [LARGE SCALE GENOMIC DNA]</scope>
    <source>
        <strain>668</strain>
    </source>
</reference>
<proteinExistence type="inferred from homology"/>
<accession>A3NDQ7</accession>
<evidence type="ECO:0000255" key="1">
    <source>
        <dbReference type="HAMAP-Rule" id="MF_00735"/>
    </source>
</evidence>
<name>PRMA_BURP6</name>
<sequence length="300" mass="32566">MSYRELVAELPREHAEALSDALVELGALSVSVEDADADTPDEQPLFGEPGLVPERTAWQHSRVIALVDATQDPAVLLAAAANEAGLAQAPRFELREVEEQDWVRLTQSQFEPIHIGEKIWVVPSWHDAPQPDALVLELDPGLAFGTGSHPTTRLCMEWLEQTVQPGQTVLDYGCGSGILAILAKKCGAGRVTGIDIDPQAVEAARHNSERNRADVTYGLPDDCPDGEFDIVVANILSNPLKLMASMLASKVKPGGRIALSGVLARQADEVASVYARYIDIAVWREHEGWVCLAGTRRESH</sequence>
<organism>
    <name type="scientific">Burkholderia pseudomallei (strain 668)</name>
    <dbReference type="NCBI Taxonomy" id="320373"/>
    <lineage>
        <taxon>Bacteria</taxon>
        <taxon>Pseudomonadati</taxon>
        <taxon>Pseudomonadota</taxon>
        <taxon>Betaproteobacteria</taxon>
        <taxon>Burkholderiales</taxon>
        <taxon>Burkholderiaceae</taxon>
        <taxon>Burkholderia</taxon>
        <taxon>pseudomallei group</taxon>
    </lineage>
</organism>